<organism>
    <name type="scientific">Xenopus laevis</name>
    <name type="common">African clawed frog</name>
    <dbReference type="NCBI Taxonomy" id="8355"/>
    <lineage>
        <taxon>Eukaryota</taxon>
        <taxon>Metazoa</taxon>
        <taxon>Chordata</taxon>
        <taxon>Craniata</taxon>
        <taxon>Vertebrata</taxon>
        <taxon>Euteleostomi</taxon>
        <taxon>Amphibia</taxon>
        <taxon>Batrachia</taxon>
        <taxon>Anura</taxon>
        <taxon>Pipoidea</taxon>
        <taxon>Pipidae</taxon>
        <taxon>Xenopodinae</taxon>
        <taxon>Xenopus</taxon>
        <taxon>Xenopus</taxon>
    </lineage>
</organism>
<keyword id="KW-0472">Membrane</keyword>
<keyword id="KW-0496">Mitochondrion</keyword>
<keyword id="KW-1000">Mitochondrion outer membrane</keyword>
<keyword id="KW-0597">Phosphoprotein</keyword>
<keyword id="KW-0653">Protein transport</keyword>
<keyword id="KW-1185">Reference proteome</keyword>
<keyword id="KW-0812">Transmembrane</keyword>
<keyword id="KW-1133">Transmembrane helix</keyword>
<keyword id="KW-0813">Transport</keyword>
<proteinExistence type="evidence at transcript level"/>
<reference key="1">
    <citation type="submission" date="2002-12" db="EMBL/GenBank/DDBJ databases">
        <authorList>
            <consortium name="NIH - Xenopus Gene Collection (XGC) project"/>
        </authorList>
    </citation>
    <scope>NUCLEOTIDE SEQUENCE [LARGE SCALE MRNA]</scope>
    <source>
        <tissue>Embryo</tissue>
    </source>
</reference>
<sequence length="147" mass="16448">MVAVGKTSAIAAGVCGALLLGYCIYFDRKRRSDPNFKNRLREKRRKQKIAKERAGQSRLPDLKDAEAVQKFFLEEIQLGEELLAQGDFEKGVDHLTNAIAICGQPQQLLQVLQQTLPPPVFQMLLTKLPTISQRIGNAQNLSEDDVE</sequence>
<dbReference type="EMBL" id="BC041212">
    <property type="protein sequence ID" value="AAH41212.1"/>
    <property type="molecule type" value="mRNA"/>
</dbReference>
<dbReference type="RefSeq" id="XP_018118598.1">
    <property type="nucleotide sequence ID" value="XM_018263109.1"/>
</dbReference>
<dbReference type="SMR" id="Q8AVY0"/>
<dbReference type="OMA" id="DMIAYDG"/>
<dbReference type="OrthoDB" id="2154253at2759"/>
<dbReference type="Proteomes" id="UP000186698">
    <property type="component" value="Unplaced"/>
</dbReference>
<dbReference type="Bgee" id="108716729">
    <property type="expression patterns" value="Expressed in muscle tissue and 19 other cell types or tissues"/>
</dbReference>
<dbReference type="GO" id="GO:0005742">
    <property type="term" value="C:mitochondrial outer membrane translocase complex"/>
    <property type="evidence" value="ECO:0000318"/>
    <property type="project" value="GO_Central"/>
</dbReference>
<dbReference type="GO" id="GO:0030943">
    <property type="term" value="F:mitochondrion targeting sequence binding"/>
    <property type="evidence" value="ECO:0000318"/>
    <property type="project" value="GO_Central"/>
</dbReference>
<dbReference type="GO" id="GO:0008320">
    <property type="term" value="F:protein transmembrane transporter activity"/>
    <property type="evidence" value="ECO:0007669"/>
    <property type="project" value="TreeGrafter"/>
</dbReference>
<dbReference type="GO" id="GO:0006886">
    <property type="term" value="P:intracellular protein transport"/>
    <property type="evidence" value="ECO:0007669"/>
    <property type="project" value="InterPro"/>
</dbReference>
<dbReference type="GO" id="GO:0030150">
    <property type="term" value="P:protein import into mitochondrial matrix"/>
    <property type="evidence" value="ECO:0000318"/>
    <property type="project" value="GO_Central"/>
</dbReference>
<dbReference type="GO" id="GO:0016031">
    <property type="term" value="P:tRNA import into mitochondrion"/>
    <property type="evidence" value="ECO:0000318"/>
    <property type="project" value="GO_Central"/>
</dbReference>
<dbReference type="FunFam" id="1.20.960.10:FF:000001">
    <property type="entry name" value="Mitochondrial import receptor subunit TOM20 homolog"/>
    <property type="match status" value="1"/>
</dbReference>
<dbReference type="Gene3D" id="1.20.960.10">
    <property type="entry name" value="Mitochondrial outer membrane translocase complex, subunit Tom20 domain"/>
    <property type="match status" value="1"/>
</dbReference>
<dbReference type="InterPro" id="IPR002056">
    <property type="entry name" value="MAS20"/>
</dbReference>
<dbReference type="InterPro" id="IPR022422">
    <property type="entry name" value="MAS20_rcpt_metazoan"/>
</dbReference>
<dbReference type="InterPro" id="IPR023392">
    <property type="entry name" value="Tom20_dom_sf"/>
</dbReference>
<dbReference type="PANTHER" id="PTHR12430">
    <property type="entry name" value="MITOCHONDRIAL IMPORT RECEPTOR SUBUNIT TOM20"/>
    <property type="match status" value="1"/>
</dbReference>
<dbReference type="PANTHER" id="PTHR12430:SF0">
    <property type="entry name" value="TRANSLOCASE OF OUTER MITOCHONDRIAL MEMBRANE 20"/>
    <property type="match status" value="1"/>
</dbReference>
<dbReference type="Pfam" id="PF02064">
    <property type="entry name" value="MAS20"/>
    <property type="match status" value="1"/>
</dbReference>
<dbReference type="PIRSF" id="PIRSF037707">
    <property type="entry name" value="MAS20_rcpt"/>
    <property type="match status" value="1"/>
</dbReference>
<dbReference type="PRINTS" id="PR01989">
    <property type="entry name" value="EUOM20RECPTR"/>
</dbReference>
<dbReference type="PRINTS" id="PR00351">
    <property type="entry name" value="OM20RECEPTOR"/>
</dbReference>
<dbReference type="SUPFAM" id="SSF47157">
    <property type="entry name" value="Mitochondrial import receptor subunit Tom20"/>
    <property type="match status" value="1"/>
</dbReference>
<feature type="chain" id="PRO_0000317745" description="Mitochondrial import receptor subunit TOM20 homolog">
    <location>
        <begin position="1"/>
        <end position="147"/>
    </location>
</feature>
<feature type="topological domain" description="Mitochondrial intermembrane" evidence="3">
    <location>
        <begin position="1"/>
        <end position="3"/>
    </location>
</feature>
<feature type="transmembrane region" description="Helical" evidence="3">
    <location>
        <begin position="4"/>
        <end position="26"/>
    </location>
</feature>
<feature type="topological domain" description="Cytoplasmic" evidence="3">
    <location>
        <begin position="27"/>
        <end position="147"/>
    </location>
</feature>
<comment type="function">
    <text evidence="1">Central component of the receptor complex responsible for the recognition and translocation of cytosolically synthesized mitochondrial preproteins. Together with tom22 functions as the transit peptide receptor at the surface of the mitochondrion outer membrane and facilitates the movement of preproteins into the tom40 translocation pore (By similarity).</text>
</comment>
<comment type="subunit">
    <text evidence="2">Forms part of the preprotein translocase complex of the outer mitochondrial membrane (TOM complex). Interacts with tom22 (By similarity).</text>
</comment>
<comment type="subcellular location">
    <subcellularLocation>
        <location evidence="2">Mitochondrion outer membrane</location>
        <topology evidence="3">Single-pass membrane protein</topology>
    </subcellularLocation>
</comment>
<comment type="similarity">
    <text evidence="4">Belongs to the Tom20 family.</text>
</comment>
<name>TOM20_XENLA</name>
<accession>Q8AVY0</accession>
<protein>
    <recommendedName>
        <fullName>Mitochondrial import receptor subunit TOM20 homolog</fullName>
    </recommendedName>
    <alternativeName>
        <fullName>Mitochondrial 20 kDa outer membrane protein</fullName>
    </alternativeName>
    <alternativeName>
        <fullName>Outer mitochondrial membrane receptor Tom20</fullName>
    </alternativeName>
</protein>
<evidence type="ECO:0000250" key="1"/>
<evidence type="ECO:0000250" key="2">
    <source>
        <dbReference type="UniProtKB" id="Q15388"/>
    </source>
</evidence>
<evidence type="ECO:0000255" key="3"/>
<evidence type="ECO:0000305" key="4"/>
<gene>
    <name type="primary">tomm20</name>
</gene>